<organism>
    <name type="scientific">Debaryomyces hansenii (strain ATCC 36239 / CBS 767 / BCRC 21394 / JCM 1990 / NBRC 0083 / IGC 2968)</name>
    <name type="common">Yeast</name>
    <name type="synonym">Torulaspora hansenii</name>
    <dbReference type="NCBI Taxonomy" id="284592"/>
    <lineage>
        <taxon>Eukaryota</taxon>
        <taxon>Fungi</taxon>
        <taxon>Dikarya</taxon>
        <taxon>Ascomycota</taxon>
        <taxon>Saccharomycotina</taxon>
        <taxon>Pichiomycetes</taxon>
        <taxon>Debaryomycetaceae</taxon>
        <taxon>Debaryomyces</taxon>
    </lineage>
</organism>
<protein>
    <recommendedName>
        <fullName>Oxidant-induced cell-cycle arrest protein 5</fullName>
    </recommendedName>
</protein>
<name>OCA5_DEBHA</name>
<dbReference type="EMBL" id="CR382138">
    <property type="protein sequence ID" value="CAG88802.2"/>
    <property type="molecule type" value="Genomic_DNA"/>
</dbReference>
<dbReference type="RefSeq" id="XP_460489.2">
    <property type="nucleotide sequence ID" value="XM_460489.2"/>
</dbReference>
<dbReference type="FunCoup" id="Q6BMT2">
    <property type="interactions" value="48"/>
</dbReference>
<dbReference type="STRING" id="284592.Q6BMT2"/>
<dbReference type="GeneID" id="2903890"/>
<dbReference type="KEGG" id="dha:DEHA2F02838g"/>
<dbReference type="eggNOG" id="ENOG502QVXN">
    <property type="taxonomic scope" value="Eukaryota"/>
</dbReference>
<dbReference type="HOGENOM" id="CLU_028817_0_0_1"/>
<dbReference type="InParanoid" id="Q6BMT2"/>
<dbReference type="OMA" id="LRFKVWP"/>
<dbReference type="OrthoDB" id="27140at2759"/>
<dbReference type="Proteomes" id="UP000000599">
    <property type="component" value="Chromosome F"/>
</dbReference>
<dbReference type="GO" id="GO:0005737">
    <property type="term" value="C:cytoplasm"/>
    <property type="evidence" value="ECO:0007669"/>
    <property type="project" value="UniProtKB-SubCell"/>
</dbReference>
<dbReference type="Gene3D" id="1.10.472.80">
    <property type="entry name" value="Ypt/Rab-GAP domain of gyp1p, domain 3"/>
    <property type="match status" value="1"/>
</dbReference>
<dbReference type="InterPro" id="IPR035969">
    <property type="entry name" value="Rab-GAP_TBC_sf"/>
</dbReference>
<dbReference type="SUPFAM" id="SSF47923">
    <property type="entry name" value="Ypt/Rab-GAP domain of gyp1p"/>
    <property type="match status" value="1"/>
</dbReference>
<sequence length="640" mass="73584">MSQDFINTDNHTSNLSSNNLYTNINAGNSIMSEELAVKDNSNSTVASDNTERTPCDAENGSIYTTGRSVVSDNAGNQDKGKNFPNGESSSASGKSENSHADDENDGSTENNSKLGQPSFSYDSEIFQLCQHYLTTKNHQGLALVARQKGLPPFLRFKIWPILLKHHPFVVNPFIEPDNEVNNENDTNTEEDLKSDIKRDLLKYIHRLNYTNLIDLNNASPEEQEVFKILESSILKFVKKWGKIMKYDHALTWIALGLAEWFPPIPNTSWVLVGRDFPSSKTSCIKNLFHDYSNYINNVPNLNEYLEDLVNDKEIINMSFRDVYERLVLVLLHAPEEKIKNKSKDLLGPKKINRKILPINGGTIEERVSFFIYCFRKLLPELSQYFQEEQILNKFGSHDDEWLIWWLKWCGSKVWSRLDRGRIWDLIFGWRLQNFKKSNSYYVEKLNLSDNLINKLGPDNFWSVSKDNDDSTIENYKKSSSFKDLINELNINESSNSNSPTSNSPSNSSINEDLLPPSPLSSSSFSSSNIAPADEFNIPFSKLDPHVELLFVTLALLKSKENTLMELDQHEIRQFLSRLPTKSINISNKYKHFKPQESDMNNNIISNDSRNNHKIDFMDNIINESGELWRKWLWSEMIDDN</sequence>
<evidence type="ECO:0000250" key="1"/>
<evidence type="ECO:0000256" key="2">
    <source>
        <dbReference type="SAM" id="MobiDB-lite"/>
    </source>
</evidence>
<evidence type="ECO:0000305" key="3"/>
<feature type="chain" id="PRO_0000408211" description="Oxidant-induced cell-cycle arrest protein 5">
    <location>
        <begin position="1"/>
        <end position="640"/>
    </location>
</feature>
<feature type="domain" description="Rab-GAP TBC">
    <location>
        <begin position="149"/>
        <end position="430"/>
    </location>
</feature>
<feature type="region of interest" description="Disordered" evidence="2">
    <location>
        <begin position="39"/>
        <end position="116"/>
    </location>
</feature>
<feature type="region of interest" description="Disordered" evidence="2">
    <location>
        <begin position="492"/>
        <end position="520"/>
    </location>
</feature>
<feature type="compositionally biased region" description="Polar residues" evidence="2">
    <location>
        <begin position="39"/>
        <end position="48"/>
    </location>
</feature>
<feature type="compositionally biased region" description="Polar residues" evidence="2">
    <location>
        <begin position="61"/>
        <end position="76"/>
    </location>
</feature>
<feature type="compositionally biased region" description="Low complexity" evidence="2">
    <location>
        <begin position="85"/>
        <end position="95"/>
    </location>
</feature>
<feature type="compositionally biased region" description="Polar residues" evidence="2">
    <location>
        <begin position="107"/>
        <end position="116"/>
    </location>
</feature>
<gene>
    <name type="primary">OCA5</name>
    <name type="ordered locus">DEHA2F02838g</name>
</gene>
<proteinExistence type="inferred from homology"/>
<keyword id="KW-0963">Cytoplasm</keyword>
<keyword id="KW-1185">Reference proteome</keyword>
<accession>Q6BMT2</accession>
<comment type="subcellular location">
    <subcellularLocation>
        <location evidence="1">Cytoplasm</location>
    </subcellularLocation>
</comment>
<comment type="similarity">
    <text evidence="3">Belongs to the OCA5 family.</text>
</comment>
<reference key="1">
    <citation type="journal article" date="2004" name="Nature">
        <title>Genome evolution in yeasts.</title>
        <authorList>
            <person name="Dujon B."/>
            <person name="Sherman D."/>
            <person name="Fischer G."/>
            <person name="Durrens P."/>
            <person name="Casaregola S."/>
            <person name="Lafontaine I."/>
            <person name="de Montigny J."/>
            <person name="Marck C."/>
            <person name="Neuveglise C."/>
            <person name="Talla E."/>
            <person name="Goffard N."/>
            <person name="Frangeul L."/>
            <person name="Aigle M."/>
            <person name="Anthouard V."/>
            <person name="Babour A."/>
            <person name="Barbe V."/>
            <person name="Barnay S."/>
            <person name="Blanchin S."/>
            <person name="Beckerich J.-M."/>
            <person name="Beyne E."/>
            <person name="Bleykasten C."/>
            <person name="Boisrame A."/>
            <person name="Boyer J."/>
            <person name="Cattolico L."/>
            <person name="Confanioleri F."/>
            <person name="de Daruvar A."/>
            <person name="Despons L."/>
            <person name="Fabre E."/>
            <person name="Fairhead C."/>
            <person name="Ferry-Dumazet H."/>
            <person name="Groppi A."/>
            <person name="Hantraye F."/>
            <person name="Hennequin C."/>
            <person name="Jauniaux N."/>
            <person name="Joyet P."/>
            <person name="Kachouri R."/>
            <person name="Kerrest A."/>
            <person name="Koszul R."/>
            <person name="Lemaire M."/>
            <person name="Lesur I."/>
            <person name="Ma L."/>
            <person name="Muller H."/>
            <person name="Nicaud J.-M."/>
            <person name="Nikolski M."/>
            <person name="Oztas S."/>
            <person name="Ozier-Kalogeropoulos O."/>
            <person name="Pellenz S."/>
            <person name="Potier S."/>
            <person name="Richard G.-F."/>
            <person name="Straub M.-L."/>
            <person name="Suleau A."/>
            <person name="Swennen D."/>
            <person name="Tekaia F."/>
            <person name="Wesolowski-Louvel M."/>
            <person name="Westhof E."/>
            <person name="Wirth B."/>
            <person name="Zeniou-Meyer M."/>
            <person name="Zivanovic Y."/>
            <person name="Bolotin-Fukuhara M."/>
            <person name="Thierry A."/>
            <person name="Bouchier C."/>
            <person name="Caudron B."/>
            <person name="Scarpelli C."/>
            <person name="Gaillardin C."/>
            <person name="Weissenbach J."/>
            <person name="Wincker P."/>
            <person name="Souciet J.-L."/>
        </authorList>
    </citation>
    <scope>NUCLEOTIDE SEQUENCE [LARGE SCALE GENOMIC DNA]</scope>
    <source>
        <strain>ATCC 36239 / CBS 767 / BCRC 21394 / JCM 1990 / NBRC 0083 / IGC 2968</strain>
    </source>
</reference>